<accession>Q94JM3</accession>
<accession>O23671</accession>
<accession>Q56YL7</accession>
<accession>Q56YP4</accession>
<accession>Q56YR7</accession>
<accession>Q9C5W5</accession>
<accession>Q9FIT6</accession>
<dbReference type="EMBL" id="AY669787">
    <property type="protein sequence ID" value="AAT67071.1"/>
    <property type="molecule type" value="mRNA"/>
</dbReference>
<dbReference type="EMBL" id="AB016880">
    <property type="protein sequence ID" value="BAB10162.1"/>
    <property type="molecule type" value="Genomic_DNA"/>
</dbReference>
<dbReference type="EMBL" id="CP002688">
    <property type="protein sequence ID" value="AED97548.1"/>
    <property type="molecule type" value="Genomic_DNA"/>
</dbReference>
<dbReference type="EMBL" id="CP002688">
    <property type="protein sequence ID" value="AED97549.1"/>
    <property type="molecule type" value="Genomic_DNA"/>
</dbReference>
<dbReference type="EMBL" id="CP002688">
    <property type="protein sequence ID" value="AED97550.1"/>
    <property type="molecule type" value="Genomic_DNA"/>
</dbReference>
<dbReference type="EMBL" id="CP002688">
    <property type="protein sequence ID" value="ANM68885.1"/>
    <property type="molecule type" value="Genomic_DNA"/>
</dbReference>
<dbReference type="EMBL" id="AF336918">
    <property type="protein sequence ID" value="AAG53999.1"/>
    <property type="molecule type" value="mRNA"/>
</dbReference>
<dbReference type="EMBL" id="AF378862">
    <property type="protein sequence ID" value="AAK55665.1"/>
    <property type="status" value="ALT_FRAME"/>
    <property type="molecule type" value="mRNA"/>
</dbReference>
<dbReference type="EMBL" id="BT000784">
    <property type="protein sequence ID" value="AAN31923.1"/>
    <property type="molecule type" value="mRNA"/>
</dbReference>
<dbReference type="EMBL" id="BT001072">
    <property type="protein sequence ID" value="AAN46837.1"/>
    <property type="status" value="ALT_FRAME"/>
    <property type="molecule type" value="mRNA"/>
</dbReference>
<dbReference type="EMBL" id="AK221252">
    <property type="protein sequence ID" value="BAD93891.1"/>
    <property type="molecule type" value="mRNA"/>
</dbReference>
<dbReference type="EMBL" id="AK221254">
    <property type="protein sequence ID" value="BAD93897.1"/>
    <property type="molecule type" value="mRNA"/>
</dbReference>
<dbReference type="EMBL" id="AK221274">
    <property type="protein sequence ID" value="BAD93959.1"/>
    <property type="molecule type" value="mRNA"/>
</dbReference>
<dbReference type="EMBL" id="AK221277">
    <property type="protein sequence ID" value="BAD93968.1"/>
    <property type="molecule type" value="mRNA"/>
</dbReference>
<dbReference type="EMBL" id="AK221282">
    <property type="protein sequence ID" value="BAD93985.1"/>
    <property type="molecule type" value="mRNA"/>
</dbReference>
<dbReference type="EMBL" id="AK221305">
    <property type="protein sequence ID" value="BAD94058.1"/>
    <property type="molecule type" value="mRNA"/>
</dbReference>
<dbReference type="EMBL" id="U89771">
    <property type="protein sequence ID" value="AAC49752.1"/>
    <property type="status" value="ALT_INIT"/>
    <property type="molecule type" value="mRNA"/>
</dbReference>
<dbReference type="EMBL" id="AJ441313">
    <property type="protein sequence ID" value="CAD29696.1"/>
    <property type="status" value="ALT_INIT"/>
    <property type="molecule type" value="mRNA"/>
</dbReference>
<dbReference type="EMBL" id="AJ458328">
    <property type="protein sequence ID" value="CAD30210.1"/>
    <property type="status" value="ALT_INIT"/>
    <property type="molecule type" value="mRNA"/>
</dbReference>
<dbReference type="RefSeq" id="NP_001330603.1">
    <molecule id="Q94JM3-1"/>
    <property type="nucleotide sequence ID" value="NM_001345519.1"/>
</dbReference>
<dbReference type="RefSeq" id="NP_201006.2">
    <molecule id="Q94JM3-1"/>
    <property type="nucleotide sequence ID" value="NM_125593.5"/>
</dbReference>
<dbReference type="RefSeq" id="NP_851244.1">
    <molecule id="Q94JM3-1"/>
    <property type="nucleotide sequence ID" value="NM_180913.4"/>
</dbReference>
<dbReference type="RefSeq" id="NP_974980.1">
    <molecule id="Q94JM3-1"/>
    <property type="nucleotide sequence ID" value="NM_203251.4"/>
</dbReference>
<dbReference type="SMR" id="Q94JM3"/>
<dbReference type="BioGRID" id="21565">
    <property type="interactions" value="30"/>
</dbReference>
<dbReference type="DIP" id="DIP-46014N"/>
<dbReference type="FunCoup" id="Q94JM3">
    <property type="interactions" value="2111"/>
</dbReference>
<dbReference type="IntAct" id="Q94JM3">
    <property type="interactions" value="20"/>
</dbReference>
<dbReference type="STRING" id="3702.Q94JM3"/>
<dbReference type="iPTMnet" id="Q94JM3"/>
<dbReference type="PaxDb" id="3702-AT5G62000.1"/>
<dbReference type="ProteomicsDB" id="246955">
    <molecule id="Q94JM3-1"/>
</dbReference>
<dbReference type="EnsemblPlants" id="AT5G62000.1">
    <molecule id="Q94JM3-1"/>
    <property type="protein sequence ID" value="AT5G62000.1"/>
    <property type="gene ID" value="AT5G62000"/>
</dbReference>
<dbReference type="EnsemblPlants" id="AT5G62000.2">
    <molecule id="Q94JM3-1"/>
    <property type="protein sequence ID" value="AT5G62000.2"/>
    <property type="gene ID" value="AT5G62000"/>
</dbReference>
<dbReference type="EnsemblPlants" id="AT5G62000.3">
    <molecule id="Q94JM3-1"/>
    <property type="protein sequence ID" value="AT5G62000.3"/>
    <property type="gene ID" value="AT5G62000"/>
</dbReference>
<dbReference type="EnsemblPlants" id="AT5G62000.5">
    <molecule id="Q94JM3-1"/>
    <property type="protein sequence ID" value="AT5G62000.5"/>
    <property type="gene ID" value="AT5G62000"/>
</dbReference>
<dbReference type="GeneID" id="836321"/>
<dbReference type="Gramene" id="AT5G62000.1">
    <molecule id="Q94JM3-1"/>
    <property type="protein sequence ID" value="AT5G62000.1"/>
    <property type="gene ID" value="AT5G62000"/>
</dbReference>
<dbReference type="Gramene" id="AT5G62000.2">
    <molecule id="Q94JM3-1"/>
    <property type="protein sequence ID" value="AT5G62000.2"/>
    <property type="gene ID" value="AT5G62000"/>
</dbReference>
<dbReference type="Gramene" id="AT5G62000.3">
    <molecule id="Q94JM3-1"/>
    <property type="protein sequence ID" value="AT5G62000.3"/>
    <property type="gene ID" value="AT5G62000"/>
</dbReference>
<dbReference type="Gramene" id="AT5G62000.5">
    <molecule id="Q94JM3-1"/>
    <property type="protein sequence ID" value="AT5G62000.5"/>
    <property type="gene ID" value="AT5G62000"/>
</dbReference>
<dbReference type="KEGG" id="ath:AT5G62000"/>
<dbReference type="Araport" id="AT5G62000"/>
<dbReference type="TAIR" id="AT5G62000">
    <property type="gene designation" value="ARF2"/>
</dbReference>
<dbReference type="eggNOG" id="ENOG502QRXI">
    <property type="taxonomic scope" value="Eukaryota"/>
</dbReference>
<dbReference type="HOGENOM" id="CLU_002626_2_2_1"/>
<dbReference type="InParanoid" id="Q94JM3"/>
<dbReference type="OMA" id="DANPNRW"/>
<dbReference type="PhylomeDB" id="Q94JM3"/>
<dbReference type="PRO" id="PR:Q94JM3"/>
<dbReference type="Proteomes" id="UP000006548">
    <property type="component" value="Chromosome 5"/>
</dbReference>
<dbReference type="ExpressionAtlas" id="Q94JM3">
    <property type="expression patterns" value="baseline and differential"/>
</dbReference>
<dbReference type="GO" id="GO:0005634">
    <property type="term" value="C:nucleus"/>
    <property type="evidence" value="ECO:0000314"/>
    <property type="project" value="TAIR"/>
</dbReference>
<dbReference type="GO" id="GO:0003700">
    <property type="term" value="F:DNA-binding transcription factor activity"/>
    <property type="evidence" value="ECO:0000314"/>
    <property type="project" value="TAIR"/>
</dbReference>
<dbReference type="GO" id="GO:0043565">
    <property type="term" value="F:sequence-specific DNA binding"/>
    <property type="evidence" value="ECO:0000314"/>
    <property type="project" value="TAIR"/>
</dbReference>
<dbReference type="GO" id="GO:0009734">
    <property type="term" value="P:auxin-activated signaling pathway"/>
    <property type="evidence" value="ECO:0007669"/>
    <property type="project" value="UniProtKB-KW"/>
</dbReference>
<dbReference type="GO" id="GO:0010227">
    <property type="term" value="P:floral organ abscission"/>
    <property type="evidence" value="ECO:0000315"/>
    <property type="project" value="TAIR"/>
</dbReference>
<dbReference type="GO" id="GO:0010047">
    <property type="term" value="P:fruit dehiscence"/>
    <property type="evidence" value="ECO:0000315"/>
    <property type="project" value="TAIR"/>
</dbReference>
<dbReference type="GO" id="GO:0010150">
    <property type="term" value="P:leaf senescence"/>
    <property type="evidence" value="ECO:0000315"/>
    <property type="project" value="TAIR"/>
</dbReference>
<dbReference type="GO" id="GO:0008285">
    <property type="term" value="P:negative regulation of cell population proliferation"/>
    <property type="evidence" value="ECO:0000315"/>
    <property type="project" value="TAIR"/>
</dbReference>
<dbReference type="GO" id="GO:0045892">
    <property type="term" value="P:negative regulation of DNA-templated transcription"/>
    <property type="evidence" value="ECO:0000315"/>
    <property type="project" value="TAIR"/>
</dbReference>
<dbReference type="GO" id="GO:0048481">
    <property type="term" value="P:plant ovule development"/>
    <property type="evidence" value="ECO:0000315"/>
    <property type="project" value="TAIR"/>
</dbReference>
<dbReference type="GO" id="GO:0009911">
    <property type="term" value="P:positive regulation of flower development"/>
    <property type="evidence" value="ECO:0000315"/>
    <property type="project" value="TAIR"/>
</dbReference>
<dbReference type="GO" id="GO:1903288">
    <property type="term" value="P:positive regulation of potassium ion import across plasma membrane"/>
    <property type="evidence" value="ECO:0000315"/>
    <property type="project" value="TAIR"/>
</dbReference>
<dbReference type="GO" id="GO:0009737">
    <property type="term" value="P:response to abscisic acid"/>
    <property type="evidence" value="ECO:0000315"/>
    <property type="project" value="TAIR"/>
</dbReference>
<dbReference type="CDD" id="cd10017">
    <property type="entry name" value="B3_DNA"/>
    <property type="match status" value="1"/>
</dbReference>
<dbReference type="FunFam" id="2.30.30.1040:FF:000001">
    <property type="entry name" value="Auxin response factor"/>
    <property type="match status" value="1"/>
</dbReference>
<dbReference type="FunFam" id="2.40.330.10:FF:000001">
    <property type="entry name" value="Auxin response factor"/>
    <property type="match status" value="1"/>
</dbReference>
<dbReference type="FunFam" id="3.10.20.90:FF:000047">
    <property type="entry name" value="Auxin response factor"/>
    <property type="match status" value="1"/>
</dbReference>
<dbReference type="Gene3D" id="2.30.30.1040">
    <property type="match status" value="1"/>
</dbReference>
<dbReference type="Gene3D" id="2.40.330.10">
    <property type="entry name" value="DNA-binding pseudobarrel domain"/>
    <property type="match status" value="1"/>
</dbReference>
<dbReference type="Gene3D" id="3.10.20.90">
    <property type="entry name" value="Phosphatidylinositol 3-kinase Catalytic Subunit, Chain A, domain 1"/>
    <property type="match status" value="1"/>
</dbReference>
<dbReference type="InterPro" id="IPR010525">
    <property type="entry name" value="ARF_dom"/>
</dbReference>
<dbReference type="InterPro" id="IPR044835">
    <property type="entry name" value="ARF_plant"/>
</dbReference>
<dbReference type="InterPro" id="IPR033389">
    <property type="entry name" value="AUX/IAA_dom"/>
</dbReference>
<dbReference type="InterPro" id="IPR003340">
    <property type="entry name" value="B3_DNA-bd"/>
</dbReference>
<dbReference type="InterPro" id="IPR015300">
    <property type="entry name" value="DNA-bd_pseudobarrel_sf"/>
</dbReference>
<dbReference type="InterPro" id="IPR053793">
    <property type="entry name" value="PB1-like"/>
</dbReference>
<dbReference type="PANTHER" id="PTHR31384:SF79">
    <property type="entry name" value="AUXIN RESPONSE FACTOR 2"/>
    <property type="match status" value="1"/>
</dbReference>
<dbReference type="PANTHER" id="PTHR31384">
    <property type="entry name" value="AUXIN RESPONSE FACTOR 4-RELATED"/>
    <property type="match status" value="1"/>
</dbReference>
<dbReference type="Pfam" id="PF06507">
    <property type="entry name" value="ARF_AD"/>
    <property type="match status" value="1"/>
</dbReference>
<dbReference type="Pfam" id="PF02309">
    <property type="entry name" value="AUX_IAA"/>
    <property type="match status" value="1"/>
</dbReference>
<dbReference type="Pfam" id="PF02362">
    <property type="entry name" value="B3"/>
    <property type="match status" value="1"/>
</dbReference>
<dbReference type="SMART" id="SM01019">
    <property type="entry name" value="B3"/>
    <property type="match status" value="1"/>
</dbReference>
<dbReference type="SUPFAM" id="SSF54277">
    <property type="entry name" value="CAD &amp; PB1 domains"/>
    <property type="match status" value="1"/>
</dbReference>
<dbReference type="SUPFAM" id="SSF101936">
    <property type="entry name" value="DNA-binding pseudobarrel domain"/>
    <property type="match status" value="1"/>
</dbReference>
<dbReference type="PROSITE" id="PS50863">
    <property type="entry name" value="B3"/>
    <property type="match status" value="1"/>
</dbReference>
<dbReference type="PROSITE" id="PS51745">
    <property type="entry name" value="PB1"/>
    <property type="match status" value="1"/>
</dbReference>
<feature type="chain" id="PRO_0000111506" description="Auxin response factor 2">
    <location>
        <begin position="1"/>
        <end position="859"/>
    </location>
</feature>
<feature type="domain" description="PB1" evidence="2">
    <location>
        <begin position="733"/>
        <end position="817"/>
    </location>
</feature>
<feature type="DNA-binding region" description="TF-B3" evidence="1">
    <location>
        <begin position="164"/>
        <end position="266"/>
    </location>
</feature>
<feature type="region of interest" description="Disordered" evidence="3">
    <location>
        <begin position="1"/>
        <end position="48"/>
    </location>
</feature>
<feature type="region of interest" description="Disordered" evidence="3">
    <location>
        <begin position="396"/>
        <end position="442"/>
    </location>
</feature>
<feature type="region of interest" description="Disordered" evidence="3">
    <location>
        <begin position="687"/>
        <end position="736"/>
    </location>
</feature>
<feature type="region of interest" description="Disordered" evidence="3">
    <location>
        <begin position="829"/>
        <end position="859"/>
    </location>
</feature>
<feature type="compositionally biased region" description="Low complexity" evidence="3">
    <location>
        <begin position="14"/>
        <end position="23"/>
    </location>
</feature>
<feature type="compositionally biased region" description="Pro residues" evidence="3">
    <location>
        <begin position="396"/>
        <end position="407"/>
    </location>
</feature>
<feature type="compositionally biased region" description="Polar residues" evidence="3">
    <location>
        <begin position="416"/>
        <end position="426"/>
    </location>
</feature>
<feature type="compositionally biased region" description="Polar residues" evidence="3">
    <location>
        <begin position="695"/>
        <end position="704"/>
    </location>
</feature>
<feature type="compositionally biased region" description="Polar residues" evidence="3">
    <location>
        <begin position="847"/>
        <end position="859"/>
    </location>
</feature>
<feature type="sequence conflict" description="In Ref. 6; AAC49752 and 7; CAD29696/CAD30210." evidence="9" ref="6 7">
    <original>RR</original>
    <variation>KK</variation>
    <location>
        <begin position="491"/>
        <end position="492"/>
    </location>
</feature>
<feature type="sequence conflict" description="In Ref. 6; AAC49752 and 7; CAD29696/CAD30210." evidence="9" ref="6 7">
    <original>D</original>
    <variation>E</variation>
    <location>
        <position position="520"/>
    </location>
</feature>
<feature type="sequence conflict" description="In Ref. 5; BAD93968." evidence="9" ref="5">
    <original>V</original>
    <variation>A</variation>
    <location>
        <position position="596"/>
    </location>
</feature>
<feature type="sequence conflict" description="In Ref. 6; AAC49752 and 7; CAD29696/CAD30210." evidence="9" ref="6 7">
    <original>R</original>
    <variation>K</variation>
    <location>
        <position position="675"/>
    </location>
</feature>
<feature type="sequence conflict" description="In Ref. 6; AAC49752 and 7; CAD29696/CAD30210." evidence="9" ref="6 7">
    <original>P</original>
    <variation>Q</variation>
    <location>
        <position position="823"/>
    </location>
</feature>
<feature type="sequence conflict" description="In Ref. 5; BAD93959/BAD93897/BAD93891." evidence="9" ref="5">
    <original>L</original>
    <variation>V</variation>
    <location>
        <position position="826"/>
    </location>
</feature>
<gene>
    <name type="primary">ARF2</name>
    <name type="synonym">MNT</name>
    <name type="ordered locus">At5g62000</name>
    <name type="ORF">MTG10.3</name>
</gene>
<name>ARFB_ARATH</name>
<sequence length="859" mass="95701">MASSEVSMKGNRGGDNFSSSGFSDPKETRNVSVAGEGQKSNSTRSAAAERALDPEAALYRELWHACAGPLVTVPRQDDRVFYFPQGHIEQVEASTNQAAEQQMPLYDLPSKLLCRVINVDLKAEADTDEVYAQITLLPEANQDENAIEKEAPLPPPPRFQVHSFCKTLTASDTSTHGGFSVLRRHADECLPPLDMSRQPPTQELVAKDLHANEWRFRHIFRGQPRRHLLQSGWSVFVSSKRLVAGDAFIFLRGENGELRVGVRRAMRQQGNVPSSVISSHSMHLGVLATAWHAISTGTMFTVYYKPRTSPSEFIVPFDQYMESVKNNYSIGMRFKMRFEGEEAPEQRFTGTIVGIEESDPTRWPKSKWRSLKVRWDETSSIPRPDRVSPWKVEPALAPPALSPVPMPRPKRPRSNIAPSSPDSSMLTREGTTKANMDPLPASGLSRVLQGQEYSTLRTKHTESVECDAPENSVVWQSSADDDKVDVVSGSRRYGSENWMSSARHEPTYTDLLSGFGTNIDPSHGQRIPFYDHSSSPSMPAKRILSDSEGKFDYLANQWQMIHSGLSLKLHESPKVPAATDASLQGRCNVKYSEYPVLNGLSTENAGGNWPIRPRALNYYEEVVNAQAQAQAREQVTKQPFTIQEETAKSREGNCRLFGIPLTNNMNGTDSTMSQRNNLNDAAGLTQIASPKVQDLSDQSKGSKSTNDHREQGRPFQTNNPHPKDAQTKTNSSRSCTKVHKQGIALGRSVDLSKFQNYEELVAELDRLFEFNGELMAPKKDWLIVYTDEENDMMLVGDDPWQEFCCMVRKIFIYTKEEVRKMNPGTLSCRSEEEAVVGEGSDAKDAKSASNPSLSSAGNS</sequence>
<evidence type="ECO:0000255" key="1">
    <source>
        <dbReference type="PROSITE-ProRule" id="PRU00326"/>
    </source>
</evidence>
<evidence type="ECO:0000255" key="2">
    <source>
        <dbReference type="PROSITE-ProRule" id="PRU01081"/>
    </source>
</evidence>
<evidence type="ECO:0000256" key="3">
    <source>
        <dbReference type="SAM" id="MobiDB-lite"/>
    </source>
</evidence>
<evidence type="ECO:0000269" key="4">
    <source>
    </source>
</evidence>
<evidence type="ECO:0000269" key="5">
    <source>
    </source>
</evidence>
<evidence type="ECO:0000269" key="6">
    <source>
    </source>
</evidence>
<evidence type="ECO:0000269" key="7">
    <source>
    </source>
</evidence>
<evidence type="ECO:0000269" key="8">
    <source>
    </source>
</evidence>
<evidence type="ECO:0000305" key="9"/>
<evidence type="ECO:0000305" key="10">
    <source ref="5"/>
</evidence>
<reference key="1">
    <citation type="journal article" date="2005" name="Plant Cell">
        <title>Functional genomic analysis of the AUXIN RESPONSE FACTOR gene family members in Arabidopsis thaliana: unique and overlapping functions of ARF7 and ARF19.</title>
        <authorList>
            <person name="Okushima Y."/>
            <person name="Overvoorde P.J."/>
            <person name="Arima K."/>
            <person name="Alonso J.M."/>
            <person name="Chan A."/>
            <person name="Chang C."/>
            <person name="Ecker J.R."/>
            <person name="Hughes B."/>
            <person name="Lui A."/>
            <person name="Nguyen D."/>
            <person name="Onodera C."/>
            <person name="Quach H."/>
            <person name="Smith A."/>
            <person name="Yu G."/>
            <person name="Theologis A."/>
        </authorList>
    </citation>
    <scope>NUCLEOTIDE SEQUENCE [MRNA]</scope>
    <source>
        <strain>cv. Columbia</strain>
    </source>
</reference>
<reference key="2">
    <citation type="journal article" date="1998" name="DNA Res.">
        <title>Structural analysis of Arabidopsis thaliana chromosome 5. VII. Sequence features of the regions of 1,013,767 bp covered by sixteen physically assigned P1 and TAC clones.</title>
        <authorList>
            <person name="Nakamura Y."/>
            <person name="Sato S."/>
            <person name="Asamizu E."/>
            <person name="Kaneko T."/>
            <person name="Kotani H."/>
            <person name="Miyajima N."/>
            <person name="Tabata S."/>
        </authorList>
    </citation>
    <scope>NUCLEOTIDE SEQUENCE [LARGE SCALE GENOMIC DNA]</scope>
    <source>
        <strain>cv. Columbia</strain>
    </source>
</reference>
<reference key="3">
    <citation type="journal article" date="2017" name="Plant J.">
        <title>Araport11: a complete reannotation of the Arabidopsis thaliana reference genome.</title>
        <authorList>
            <person name="Cheng C.Y."/>
            <person name="Krishnakumar V."/>
            <person name="Chan A.P."/>
            <person name="Thibaud-Nissen F."/>
            <person name="Schobel S."/>
            <person name="Town C.D."/>
        </authorList>
    </citation>
    <scope>GENOME REANNOTATION</scope>
    <source>
        <strain>cv. Columbia</strain>
    </source>
</reference>
<reference key="4">
    <citation type="journal article" date="2003" name="Science">
        <title>Empirical analysis of transcriptional activity in the Arabidopsis genome.</title>
        <authorList>
            <person name="Yamada K."/>
            <person name="Lim J."/>
            <person name="Dale J.M."/>
            <person name="Chen H."/>
            <person name="Shinn P."/>
            <person name="Palm C.J."/>
            <person name="Southwick A.M."/>
            <person name="Wu H.C."/>
            <person name="Kim C.J."/>
            <person name="Nguyen M."/>
            <person name="Pham P.K."/>
            <person name="Cheuk R.F."/>
            <person name="Karlin-Newmann G."/>
            <person name="Liu S.X."/>
            <person name="Lam B."/>
            <person name="Sakano H."/>
            <person name="Wu T."/>
            <person name="Yu G."/>
            <person name="Miranda M."/>
            <person name="Quach H.L."/>
            <person name="Tripp M."/>
            <person name="Chang C.H."/>
            <person name="Lee J.M."/>
            <person name="Toriumi M.J."/>
            <person name="Chan M.M."/>
            <person name="Tang C.C."/>
            <person name="Onodera C.S."/>
            <person name="Deng J.M."/>
            <person name="Akiyama K."/>
            <person name="Ansari Y."/>
            <person name="Arakawa T."/>
            <person name="Banh J."/>
            <person name="Banno F."/>
            <person name="Bowser L."/>
            <person name="Brooks S.Y."/>
            <person name="Carninci P."/>
            <person name="Chao Q."/>
            <person name="Choy N."/>
            <person name="Enju A."/>
            <person name="Goldsmith A.D."/>
            <person name="Gurjal M."/>
            <person name="Hansen N.F."/>
            <person name="Hayashizaki Y."/>
            <person name="Johnson-Hopson C."/>
            <person name="Hsuan V.W."/>
            <person name="Iida K."/>
            <person name="Karnes M."/>
            <person name="Khan S."/>
            <person name="Koesema E."/>
            <person name="Ishida J."/>
            <person name="Jiang P.X."/>
            <person name="Jones T."/>
            <person name="Kawai J."/>
            <person name="Kamiya A."/>
            <person name="Meyers C."/>
            <person name="Nakajima M."/>
            <person name="Narusaka M."/>
            <person name="Seki M."/>
            <person name="Sakurai T."/>
            <person name="Satou M."/>
            <person name="Tamse R."/>
            <person name="Vaysberg M."/>
            <person name="Wallender E.K."/>
            <person name="Wong C."/>
            <person name="Yamamura Y."/>
            <person name="Yuan S."/>
            <person name="Shinozaki K."/>
            <person name="Davis R.W."/>
            <person name="Theologis A."/>
            <person name="Ecker J.R."/>
        </authorList>
    </citation>
    <scope>NUCLEOTIDE SEQUENCE [LARGE SCALE MRNA]</scope>
    <source>
        <strain>cv. Columbia</strain>
    </source>
</reference>
<reference key="5">
    <citation type="submission" date="2005-03" db="EMBL/GenBank/DDBJ databases">
        <title>Large-scale analysis of RIKEN Arabidopsis full-length (RAFL) cDNAs.</title>
        <authorList>
            <person name="Totoki Y."/>
            <person name="Seki M."/>
            <person name="Ishida J."/>
            <person name="Nakajima M."/>
            <person name="Enju A."/>
            <person name="Kamiya A."/>
            <person name="Narusaka M."/>
            <person name="Shin-i T."/>
            <person name="Nakagawa M."/>
            <person name="Sakamoto N."/>
            <person name="Oishi K."/>
            <person name="Kohara Y."/>
            <person name="Kobayashi M."/>
            <person name="Toyoda A."/>
            <person name="Sakaki Y."/>
            <person name="Sakurai T."/>
            <person name="Iida K."/>
            <person name="Akiyama K."/>
            <person name="Satou M."/>
            <person name="Toyoda T."/>
            <person name="Konagaya A."/>
            <person name="Carninci P."/>
            <person name="Kawai J."/>
            <person name="Hayashizaki Y."/>
            <person name="Shinozaki K."/>
        </authorList>
    </citation>
    <scope>NUCLEOTIDE SEQUENCE [LARGE SCALE MRNA]</scope>
    <source>
        <strain>cv. Columbia</strain>
    </source>
</reference>
<reference key="6">
    <citation type="journal article" date="1997" name="Science">
        <title>ARF1, a transcription factor that binds to auxin response elements.</title>
        <authorList>
            <person name="Ulmasov T."/>
            <person name="Hagen G."/>
            <person name="Guilfoyle T.J."/>
        </authorList>
    </citation>
    <scope>NUCLEOTIDE SEQUENCE [MRNA] OF 394-859</scope>
    <source>
        <strain>cv. Columbia</strain>
    </source>
</reference>
<reference key="7">
    <citation type="submission" date="2002-04" db="EMBL/GenBank/DDBJ databases">
        <title>Nucleotide sequence of the Arabidopsis IAA30.</title>
        <authorList>
            <person name="Sessa G."/>
            <person name="Carabelli M."/>
            <person name="Ciarbelli A.R."/>
            <person name="Ruzza V."/>
            <person name="Steindler C."/>
            <person name="Ruberti I."/>
        </authorList>
    </citation>
    <scope>NUCLEOTIDE SEQUENCE OF 406-859</scope>
    <source>
        <strain>cv. Columbia</strain>
    </source>
</reference>
<reference key="8">
    <citation type="journal article" date="1999" name="Plant J.">
        <title>Dimerization and DNA binding of auxin response factors.</title>
        <authorList>
            <person name="Ulmasov T."/>
            <person name="Hagen G."/>
            <person name="Guilfoyle T.J."/>
        </authorList>
    </citation>
    <scope>DIMERIZATION</scope>
    <scope>TISSUE SPECIFICITY</scope>
</reference>
<reference key="9">
    <citation type="journal article" date="2002" name="Plant Mol. Biol.">
        <title>Auxin-responsive gene expression: genes, promoters and regulatory factors.</title>
        <authorList>
            <person name="Hagen G."/>
            <person name="Guilfoyle T.J."/>
        </authorList>
    </citation>
    <scope>GENE FAMILY</scope>
    <scope>NOMENCLATURE</scope>
    <scope>FUNCTION</scope>
</reference>
<reference key="10">
    <citation type="journal article" date="2005" name="Development">
        <title>AUXIN RESPONSE FACTOR1 and AUXIN RESPONSE FACTOR2 regulate senescence and floral organ abscission in Arabidopsis thaliana.</title>
        <authorList>
            <person name="Ellis C.M."/>
            <person name="Nagpal P."/>
            <person name="Young J.C."/>
            <person name="Hagen G."/>
            <person name="Guilfoyle T.J."/>
            <person name="Reed J.W."/>
        </authorList>
    </citation>
    <scope>FUNCTION</scope>
    <scope>DEVELOPMENTAL STAGE</scope>
</reference>
<reference key="11">
    <citation type="journal article" date="2005" name="Plant J.">
        <title>AUXIN RESPONSE FACTOR 2 (ARF2): a pleiotropic developmental regulator.</title>
        <authorList>
            <person name="Okushima Y."/>
            <person name="Mitina I."/>
            <person name="Quach H.L."/>
            <person name="Theologis A."/>
        </authorList>
    </citation>
    <scope>FUNCTION</scope>
    <scope>TISSUE SPECIFICITY</scope>
    <scope>DEVELOPMENTAL STAGE</scope>
    <scope>DISRUPTION PHENOTYPE</scope>
</reference>
<reference key="12">
    <citation type="journal article" date="2006" name="Development">
        <title>The AUXIN RESPONSE FACTOR 2 gene of Arabidopsis links auxin signalling, cell division, and the size of seeds and other organs.</title>
        <authorList>
            <person name="Schruff M.C."/>
            <person name="Spielman M."/>
            <person name="Tiwari S."/>
            <person name="Adams S."/>
            <person name="Fenby N."/>
            <person name="Scott R.J."/>
        </authorList>
    </citation>
    <scope>FUNCTION</scope>
    <scope>DISRUPTION PHENOTYPE</scope>
</reference>
<reference key="13">
    <citation type="journal article" date="2008" name="Trends Plant Sci.">
        <title>The plant B3 superfamily.</title>
        <authorList>
            <person name="Swaminathan K."/>
            <person name="Peterson K."/>
            <person name="Jack T."/>
        </authorList>
    </citation>
    <scope>GENE FAMILY</scope>
</reference>
<protein>
    <recommendedName>
        <fullName>Auxin response factor 2</fullName>
    </recommendedName>
    <alternativeName>
        <fullName>ARF1-binding protein</fullName>
        <shortName>ARF1-BP</shortName>
    </alternativeName>
    <alternativeName>
        <fullName>Protein MEGAINTEGUMENTA</fullName>
    </alternativeName>
</protein>
<organism>
    <name type="scientific">Arabidopsis thaliana</name>
    <name type="common">Mouse-ear cress</name>
    <dbReference type="NCBI Taxonomy" id="3702"/>
    <lineage>
        <taxon>Eukaryota</taxon>
        <taxon>Viridiplantae</taxon>
        <taxon>Streptophyta</taxon>
        <taxon>Embryophyta</taxon>
        <taxon>Tracheophyta</taxon>
        <taxon>Spermatophyta</taxon>
        <taxon>Magnoliopsida</taxon>
        <taxon>eudicotyledons</taxon>
        <taxon>Gunneridae</taxon>
        <taxon>Pentapetalae</taxon>
        <taxon>rosids</taxon>
        <taxon>malvids</taxon>
        <taxon>Brassicales</taxon>
        <taxon>Brassicaceae</taxon>
        <taxon>Camelineae</taxon>
        <taxon>Arabidopsis</taxon>
    </lineage>
</organism>
<proteinExistence type="evidence at protein level"/>
<keyword id="KW-0025">Alternative splicing</keyword>
<keyword id="KW-0927">Auxin signaling pathway</keyword>
<keyword id="KW-0238">DNA-binding</keyword>
<keyword id="KW-0539">Nucleus</keyword>
<keyword id="KW-1185">Reference proteome</keyword>
<keyword id="KW-0804">Transcription</keyword>
<keyword id="KW-0805">Transcription regulation</keyword>
<comment type="function">
    <text evidence="5 6 7 8">Auxin response factors (ARFs) are transcriptional factors that bind specifically to the DNA sequence 5'-TGTCTC-3' found in the auxin-responsive promoter elements (AuxREs). Could act as transcriptional activator or repressor. Formation of heterodimers with Aux/IAA proteins may alter their ability to modulate early auxin response genes expression. Promotes flowering, stamen development, floral organ abscission and fruit dehiscence. Functions independently of ethylene and cytokinin response pathways. May act as a repressor of cell division and organ growth.</text>
</comment>
<comment type="subunit">
    <text>Homodimers and heterodimers. Interacts with ARF1.</text>
</comment>
<comment type="interaction">
    <interactant intactId="EBI-1799262">
        <id>Q94JM3</id>
    </interactant>
    <interactant intactId="EBI-2324259">
        <id>Q8L7G0</id>
        <label>ARF1</label>
    </interactant>
    <organismsDiffer>false</organismsDiffer>
    <experiments>4</experiments>
</comment>
<comment type="interaction">
    <interactant intactId="EBI-1799262">
        <id>Q94JM3</id>
    </interactant>
    <interactant intactId="EBI-1798250">
        <id>Q39011</id>
        <label>ASK7</label>
    </interactant>
    <organismsDiffer>false</organismsDiffer>
    <experiments>6</experiments>
</comment>
<comment type="interaction">
    <interactant intactId="EBI-1799262">
        <id>Q94JM3</id>
    </interactant>
    <interactant intactId="EBI-3946434">
        <id>Q38828</id>
        <label>IAA10</label>
    </interactant>
    <organismsDiffer>false</organismsDiffer>
    <experiments>6</experiments>
</comment>
<comment type="interaction">
    <interactant intactId="EBI-1799262">
        <id>Q94JM3</id>
    </interactant>
    <interactant intactId="EBI-632243">
        <id>P93830</id>
        <label>IAA17</label>
    </interactant>
    <organismsDiffer>false</organismsDiffer>
    <experiments>3</experiments>
</comment>
<comment type="interaction">
    <interactant intactId="EBI-1799262">
        <id>Q94JM3</id>
    </interactant>
    <interactant intactId="EBI-2295525">
        <id>O24408</id>
        <label>IAA18</label>
    </interactant>
    <organismsDiffer>false</organismsDiffer>
    <experiments>3</experiments>
</comment>
<comment type="interaction">
    <interactant intactId="EBI-1799262">
        <id>Q94JM3</id>
    </interactant>
    <interactant intactId="EBI-3947418">
        <id>Q8LAL2</id>
        <label>IAA26</label>
    </interactant>
    <organismsDiffer>false</organismsDiffer>
    <experiments>7</experiments>
</comment>
<comment type="interaction">
    <interactant intactId="EBI-1799262">
        <id>Q94JM3</id>
    </interactant>
    <interactant intactId="EBI-3946697">
        <id>Q93WC4</id>
        <label>IAA29</label>
    </interactant>
    <organismsDiffer>false</organismsDiffer>
    <experiments>6</experiments>
</comment>
<comment type="interaction">
    <interactant intactId="EBI-1799262">
        <id>Q94JM3</id>
    </interactant>
    <interactant intactId="EBI-3946448">
        <id>Q8RYC6</id>
        <label>IAA32</label>
    </interactant>
    <organismsDiffer>false</organismsDiffer>
    <experiments>6</experiments>
</comment>
<comment type="interaction">
    <interactant intactId="EBI-1799262">
        <id>Q94JM3</id>
    </interactant>
    <interactant intactId="EBI-3946739">
        <id>Q9FKM7</id>
        <label>IAA33</label>
    </interactant>
    <organismsDiffer>false</organismsDiffer>
    <experiments>3</experiments>
</comment>
<comment type="interaction">
    <interactant intactId="EBI-1799262">
        <id>Q94JM3</id>
    </interactant>
    <interactant intactId="EBI-3946459">
        <id>Q9C5X0</id>
        <label>IAA34</label>
    </interactant>
    <organismsDiffer>false</organismsDiffer>
    <experiments>6</experiments>
</comment>
<comment type="interaction">
    <interactant intactId="EBI-1799262">
        <id>Q94JM3</id>
    </interactant>
    <interactant intactId="EBI-15192297">
        <id>Q9LQF0</id>
        <label>TCP23</label>
    </interactant>
    <organismsDiffer>false</organismsDiffer>
    <experiments>3</experiments>
</comment>
<comment type="interaction">
    <interactant intactId="EBI-1799262">
        <id>Q94JM3</id>
    </interactant>
    <interactant intactId="EBI-1993263">
        <id>Q8GWF1</id>
        <label>WRKY38</label>
    </interactant>
    <organismsDiffer>false</organismsDiffer>
    <experiments>3</experiments>
</comment>
<comment type="subcellular location">
    <subcellularLocation>
        <location>Nucleus</location>
    </subcellularLocation>
</comment>
<comment type="alternative products">
    <event type="alternative splicing"/>
    <isoform>
        <id>Q94JM3-1</id>
        <name>1</name>
        <sequence type="displayed"/>
    </isoform>
    <text>A number of isoforms are produced. According to EST sequences.</text>
</comment>
<comment type="tissue specificity">
    <text evidence="4 6">Expressed in the whole plant.</text>
</comment>
<comment type="developmental stage">
    <text evidence="6 7">Expressed in the sepals and carpels of young flower buds. At stage 10 of flower development, expression in the carpels becomes restricted to the style. Also expressed in anthers and filaments. At stage 13, expressed in the region at the top of the pedicel, including the abscission zone. Expressed in developing siliques.</text>
</comment>
<comment type="domain">
    <text>Interactions between auxin response factors (ARFs) and Aux/IAA proteins occur through their C-terminal dimerization domains III and IV.</text>
</comment>
<comment type="disruption phenotype">
    <text evidence="6 8">Large, dark green rosette leaves, delayed flowering, thick and long inflorescence, abnormal flower morphology and sterility in early formed flowers, but fertility in late-formed flowers. Delayed senescence and abscission. Increased seed size and weight, and extra cell division and expansion in many organs.</text>
</comment>
<comment type="similarity">
    <text evidence="9">Belongs to the ARF family.</text>
</comment>
<comment type="caution">
    <text evidence="10">Was originally erroneously termed IAA26 and IAA30 (Ref.5).</text>
</comment>
<comment type="sequence caution" evidence="9">
    <conflict type="erroneous initiation">
        <sequence resource="EMBL-CDS" id="AAC49752"/>
    </conflict>
</comment>
<comment type="sequence caution" evidence="9">
    <conflict type="frameshift">
        <sequence resource="EMBL-CDS" id="AAK55665"/>
    </conflict>
</comment>
<comment type="sequence caution" evidence="9">
    <conflict type="frameshift">
        <sequence resource="EMBL-CDS" id="AAN46837"/>
    </conflict>
</comment>
<comment type="sequence caution" evidence="9">
    <conflict type="erroneous initiation">
        <sequence resource="EMBL-CDS" id="CAD29696"/>
    </conflict>
</comment>
<comment type="sequence caution" evidence="9">
    <conflict type="erroneous initiation">
        <sequence resource="EMBL-CDS" id="CAD30210"/>
    </conflict>
</comment>